<dbReference type="EC" id="2.8.1.12"/>
<dbReference type="EMBL" id="BA000011">
    <property type="protein sequence ID" value="BAB59228.1"/>
    <property type="molecule type" value="Genomic_DNA"/>
</dbReference>
<dbReference type="RefSeq" id="WP_010916343.1">
    <property type="nucleotide sequence ID" value="NC_002689.2"/>
</dbReference>
<dbReference type="SMR" id="Q97CL5"/>
<dbReference type="STRING" id="273116.gene:9380853"/>
<dbReference type="PaxDb" id="273116-14324300"/>
<dbReference type="GeneID" id="1441573"/>
<dbReference type="KEGG" id="tvo:TVG0086076"/>
<dbReference type="eggNOG" id="arCOG00534">
    <property type="taxonomic scope" value="Archaea"/>
</dbReference>
<dbReference type="HOGENOM" id="CLU_089568_1_2_2"/>
<dbReference type="OrthoDB" id="45235at2157"/>
<dbReference type="PhylomeDB" id="Q97CL5"/>
<dbReference type="UniPathway" id="UPA00344"/>
<dbReference type="Proteomes" id="UP000001017">
    <property type="component" value="Chromosome"/>
</dbReference>
<dbReference type="GO" id="GO:0030366">
    <property type="term" value="F:molybdopterin synthase activity"/>
    <property type="evidence" value="ECO:0007669"/>
    <property type="project" value="UniProtKB-EC"/>
</dbReference>
<dbReference type="GO" id="GO:0006777">
    <property type="term" value="P:Mo-molybdopterin cofactor biosynthetic process"/>
    <property type="evidence" value="ECO:0007669"/>
    <property type="project" value="UniProtKB-KW"/>
</dbReference>
<dbReference type="CDD" id="cd00756">
    <property type="entry name" value="MoaE"/>
    <property type="match status" value="1"/>
</dbReference>
<dbReference type="Gene3D" id="3.90.1170.40">
    <property type="entry name" value="Molybdopterin biosynthesis MoaE subunit"/>
    <property type="match status" value="1"/>
</dbReference>
<dbReference type="InterPro" id="IPR036563">
    <property type="entry name" value="MoaE_sf"/>
</dbReference>
<dbReference type="InterPro" id="IPR003448">
    <property type="entry name" value="Mopterin_biosynth_MoaE"/>
</dbReference>
<dbReference type="PANTHER" id="PTHR23404">
    <property type="entry name" value="MOLYBDOPTERIN SYNTHASE RELATED"/>
    <property type="match status" value="1"/>
</dbReference>
<dbReference type="Pfam" id="PF02391">
    <property type="entry name" value="MoaE"/>
    <property type="match status" value="1"/>
</dbReference>
<dbReference type="SUPFAM" id="SSF54690">
    <property type="entry name" value="Molybdopterin synthase subunit MoaE"/>
    <property type="match status" value="1"/>
</dbReference>
<keyword id="KW-0501">Molybdenum cofactor biosynthesis</keyword>
<keyword id="KW-0808">Transferase</keyword>
<protein>
    <recommendedName>
        <fullName>Molybdopterin synthase catalytic subunit</fullName>
        <ecNumber>2.8.1.12</ecNumber>
    </recommendedName>
    <alternativeName>
        <fullName>MPT synthase subunit 2</fullName>
    </alternativeName>
    <alternativeName>
        <fullName>Molybdenum cofactor biosynthesis protein E</fullName>
    </alternativeName>
    <alternativeName>
        <fullName>Molybdopterin-converting factor large subunit</fullName>
    </alternativeName>
    <alternativeName>
        <fullName>Molybdopterin-converting factor subunit 2</fullName>
    </alternativeName>
</protein>
<comment type="function">
    <text evidence="1">Converts molybdopterin precursor Z into molybdopterin. This requires the incorporation of two sulfur atoms into precursor Z to generate a dithiolene group. The sulfur is provided by MoaD (By similarity).</text>
</comment>
<comment type="catalytic activity">
    <reaction>
        <text>2 [molybdopterin-synthase sulfur-carrier protein]-C-terminal-Gly-aminoethanethioate + cyclic pyranopterin phosphate + H2O = molybdopterin + 2 [molybdopterin-synthase sulfur-carrier protein]-C-terminal Gly-Gly + 2 H(+)</text>
        <dbReference type="Rhea" id="RHEA:26333"/>
        <dbReference type="Rhea" id="RHEA-COMP:12202"/>
        <dbReference type="Rhea" id="RHEA-COMP:19907"/>
        <dbReference type="ChEBI" id="CHEBI:15377"/>
        <dbReference type="ChEBI" id="CHEBI:15378"/>
        <dbReference type="ChEBI" id="CHEBI:58698"/>
        <dbReference type="ChEBI" id="CHEBI:59648"/>
        <dbReference type="ChEBI" id="CHEBI:90778"/>
        <dbReference type="ChEBI" id="CHEBI:232372"/>
        <dbReference type="EC" id="2.8.1.12"/>
    </reaction>
</comment>
<comment type="pathway">
    <text>Cofactor biosynthesis; molybdopterin biosynthesis.</text>
</comment>
<comment type="subunit">
    <text evidence="1">Heterotetramer of 2 MoaD subunits and 2 MoaE subunits. Also stable as homodimer. The enzyme changes between these two forms during catalysis (By similarity).</text>
</comment>
<comment type="similarity">
    <text evidence="2">Belongs to the MoaE family.</text>
</comment>
<organism>
    <name type="scientific">Thermoplasma volcanium (strain ATCC 51530 / DSM 4299 / JCM 9571 / NBRC 15438 / GSS1)</name>
    <dbReference type="NCBI Taxonomy" id="273116"/>
    <lineage>
        <taxon>Archaea</taxon>
        <taxon>Methanobacteriati</taxon>
        <taxon>Thermoplasmatota</taxon>
        <taxon>Thermoplasmata</taxon>
        <taxon>Thermoplasmatales</taxon>
        <taxon>Thermoplasmataceae</taxon>
        <taxon>Thermoplasma</taxon>
    </lineage>
</organism>
<proteinExistence type="inferred from homology"/>
<evidence type="ECO:0000250" key="1"/>
<evidence type="ECO:0000305" key="2"/>
<feature type="chain" id="PRO_0000163110" description="Molybdopterin synthase catalytic subunit">
    <location>
        <begin position="1"/>
        <end position="137"/>
    </location>
</feature>
<feature type="binding site" evidence="1">
    <location>
        <begin position="36"/>
        <end position="38"/>
    </location>
    <ligand>
        <name>substrate</name>
    </ligand>
</feature>
<feature type="binding site" evidence="1">
    <location>
        <begin position="102"/>
        <end position="103"/>
    </location>
    <ligand>
        <name>substrate</name>
    </ligand>
</feature>
<feature type="binding site" evidence="1">
    <location>
        <position position="118"/>
    </location>
    <ligand>
        <name>substrate</name>
    </ligand>
</feature>
<feature type="binding site" evidence="1">
    <location>
        <begin position="125"/>
        <end position="127"/>
    </location>
    <ligand>
        <name>substrate</name>
    </ligand>
</feature>
<sequence>MINTYVEITEKDINPLDLINRVRRPDAGAIVTFEGTVRNDSDGVRVTALYYEAYKEMAEMQIADLIDEAKKKYNILDAAVCHRIGLVGLTEDSVVISVSSAHRSSAFEACRYIIDTIKERVPIWKRDILENGNGSWH</sequence>
<reference key="1">
    <citation type="journal article" date="2000" name="Proc. Natl. Acad. Sci. U.S.A.">
        <title>Archaeal adaptation to higher temperatures revealed by genomic sequence of Thermoplasma volcanium.</title>
        <authorList>
            <person name="Kawashima T."/>
            <person name="Amano N."/>
            <person name="Koike H."/>
            <person name="Makino S."/>
            <person name="Higuchi S."/>
            <person name="Kawashima-Ohya Y."/>
            <person name="Watanabe K."/>
            <person name="Yamazaki M."/>
            <person name="Kanehori K."/>
            <person name="Kawamoto T."/>
            <person name="Nunoshiba T."/>
            <person name="Yamamoto Y."/>
            <person name="Aramaki H."/>
            <person name="Makino K."/>
            <person name="Suzuki M."/>
        </authorList>
    </citation>
    <scope>NUCLEOTIDE SEQUENCE [LARGE SCALE GENOMIC DNA]</scope>
    <source>
        <strain>ATCC 51530 / DSM 4299 / JCM 9571 / NBRC 15438 / GSS1</strain>
    </source>
</reference>
<accession>Q97CL5</accession>
<name>MOAE_THEVO</name>
<gene>
    <name type="primary">moaE</name>
    <name type="ordered locus">TV0086</name>
    <name type="ORF">TVG0086076</name>
</gene>